<organism>
    <name type="scientific">Chelativorans sp. (strain BNC1)</name>
    <dbReference type="NCBI Taxonomy" id="266779"/>
    <lineage>
        <taxon>Bacteria</taxon>
        <taxon>Pseudomonadati</taxon>
        <taxon>Pseudomonadota</taxon>
        <taxon>Alphaproteobacteria</taxon>
        <taxon>Hyphomicrobiales</taxon>
        <taxon>Phyllobacteriaceae</taxon>
        <taxon>Chelativorans</taxon>
    </lineage>
</organism>
<protein>
    <recommendedName>
        <fullName evidence="1">Large ribosomal subunit protein bL9</fullName>
    </recommendedName>
    <alternativeName>
        <fullName evidence="3">50S ribosomal protein L9</fullName>
    </alternativeName>
</protein>
<accession>Q11H14</accession>
<keyword id="KW-0687">Ribonucleoprotein</keyword>
<keyword id="KW-0689">Ribosomal protein</keyword>
<keyword id="KW-0694">RNA-binding</keyword>
<keyword id="KW-0699">rRNA-binding</keyword>
<proteinExistence type="inferred from homology"/>
<sequence>MEVILLERIPRLGQMGDVVRVKDGFARNFLLRQGKALRANDANRKKFESQRVELEARNLERKSEAQAVAEKLDGKSFVVIRSAAETGQLYGSVSARDIADVVASEGFKIGRNQVDINQPIKTIGLTNVAIALHPEVVATVTLNIARSADEAERQARGETLDSAEAIYGEEINESARPEAFFDPEAEIEQEEGEENA</sequence>
<reference key="1">
    <citation type="submission" date="2006-06" db="EMBL/GenBank/DDBJ databases">
        <title>Complete sequence of chromosome of Mesorhizobium sp. BNC1.</title>
        <authorList>
            <consortium name="US DOE Joint Genome Institute"/>
            <person name="Copeland A."/>
            <person name="Lucas S."/>
            <person name="Lapidus A."/>
            <person name="Barry K."/>
            <person name="Detter J.C."/>
            <person name="Glavina del Rio T."/>
            <person name="Hammon N."/>
            <person name="Israni S."/>
            <person name="Dalin E."/>
            <person name="Tice H."/>
            <person name="Pitluck S."/>
            <person name="Chertkov O."/>
            <person name="Brettin T."/>
            <person name="Bruce D."/>
            <person name="Han C."/>
            <person name="Tapia R."/>
            <person name="Gilna P."/>
            <person name="Schmutz J."/>
            <person name="Larimer F."/>
            <person name="Land M."/>
            <person name="Hauser L."/>
            <person name="Kyrpides N."/>
            <person name="Mikhailova N."/>
            <person name="Richardson P."/>
        </authorList>
    </citation>
    <scope>NUCLEOTIDE SEQUENCE [LARGE SCALE GENOMIC DNA]</scope>
    <source>
        <strain>BNC1</strain>
    </source>
</reference>
<name>RL9_CHESB</name>
<dbReference type="EMBL" id="CP000390">
    <property type="protein sequence ID" value="ABG63311.1"/>
    <property type="molecule type" value="Genomic_DNA"/>
</dbReference>
<dbReference type="SMR" id="Q11H14"/>
<dbReference type="STRING" id="266779.Meso_1918"/>
<dbReference type="KEGG" id="mes:Meso_1918"/>
<dbReference type="eggNOG" id="COG0359">
    <property type="taxonomic scope" value="Bacteria"/>
</dbReference>
<dbReference type="HOGENOM" id="CLU_078938_1_0_5"/>
<dbReference type="OrthoDB" id="9788336at2"/>
<dbReference type="GO" id="GO:1990904">
    <property type="term" value="C:ribonucleoprotein complex"/>
    <property type="evidence" value="ECO:0007669"/>
    <property type="project" value="UniProtKB-KW"/>
</dbReference>
<dbReference type="GO" id="GO:0005840">
    <property type="term" value="C:ribosome"/>
    <property type="evidence" value="ECO:0007669"/>
    <property type="project" value="UniProtKB-KW"/>
</dbReference>
<dbReference type="GO" id="GO:0019843">
    <property type="term" value="F:rRNA binding"/>
    <property type="evidence" value="ECO:0007669"/>
    <property type="project" value="UniProtKB-UniRule"/>
</dbReference>
<dbReference type="GO" id="GO:0003735">
    <property type="term" value="F:structural constituent of ribosome"/>
    <property type="evidence" value="ECO:0007669"/>
    <property type="project" value="InterPro"/>
</dbReference>
<dbReference type="GO" id="GO:0006412">
    <property type="term" value="P:translation"/>
    <property type="evidence" value="ECO:0007669"/>
    <property type="project" value="UniProtKB-UniRule"/>
</dbReference>
<dbReference type="Gene3D" id="3.10.430.100">
    <property type="entry name" value="Ribosomal protein L9, C-terminal domain"/>
    <property type="match status" value="1"/>
</dbReference>
<dbReference type="Gene3D" id="3.40.5.10">
    <property type="entry name" value="Ribosomal protein L9, N-terminal domain"/>
    <property type="match status" value="1"/>
</dbReference>
<dbReference type="HAMAP" id="MF_00503">
    <property type="entry name" value="Ribosomal_bL9"/>
    <property type="match status" value="1"/>
</dbReference>
<dbReference type="InterPro" id="IPR000244">
    <property type="entry name" value="Ribosomal_bL9"/>
</dbReference>
<dbReference type="InterPro" id="IPR009027">
    <property type="entry name" value="Ribosomal_bL9/RNase_H1_N"/>
</dbReference>
<dbReference type="InterPro" id="IPR020594">
    <property type="entry name" value="Ribosomal_bL9_bac/chp"/>
</dbReference>
<dbReference type="InterPro" id="IPR020069">
    <property type="entry name" value="Ribosomal_bL9_C"/>
</dbReference>
<dbReference type="InterPro" id="IPR036791">
    <property type="entry name" value="Ribosomal_bL9_C_sf"/>
</dbReference>
<dbReference type="InterPro" id="IPR020070">
    <property type="entry name" value="Ribosomal_bL9_N"/>
</dbReference>
<dbReference type="InterPro" id="IPR036935">
    <property type="entry name" value="Ribosomal_bL9_N_sf"/>
</dbReference>
<dbReference type="NCBIfam" id="TIGR00158">
    <property type="entry name" value="L9"/>
    <property type="match status" value="1"/>
</dbReference>
<dbReference type="PANTHER" id="PTHR21368">
    <property type="entry name" value="50S RIBOSOMAL PROTEIN L9"/>
    <property type="match status" value="1"/>
</dbReference>
<dbReference type="Pfam" id="PF03948">
    <property type="entry name" value="Ribosomal_L9_C"/>
    <property type="match status" value="1"/>
</dbReference>
<dbReference type="Pfam" id="PF01281">
    <property type="entry name" value="Ribosomal_L9_N"/>
    <property type="match status" value="1"/>
</dbReference>
<dbReference type="SUPFAM" id="SSF55658">
    <property type="entry name" value="L9 N-domain-like"/>
    <property type="match status" value="1"/>
</dbReference>
<dbReference type="SUPFAM" id="SSF55653">
    <property type="entry name" value="Ribosomal protein L9 C-domain"/>
    <property type="match status" value="1"/>
</dbReference>
<dbReference type="PROSITE" id="PS00651">
    <property type="entry name" value="RIBOSOMAL_L9"/>
    <property type="match status" value="1"/>
</dbReference>
<comment type="function">
    <text evidence="1">Binds to the 23S rRNA.</text>
</comment>
<comment type="similarity">
    <text evidence="1">Belongs to the bacterial ribosomal protein bL9 family.</text>
</comment>
<evidence type="ECO:0000255" key="1">
    <source>
        <dbReference type="HAMAP-Rule" id="MF_00503"/>
    </source>
</evidence>
<evidence type="ECO:0000256" key="2">
    <source>
        <dbReference type="SAM" id="MobiDB-lite"/>
    </source>
</evidence>
<evidence type="ECO:0000305" key="3"/>
<gene>
    <name evidence="1" type="primary">rplI</name>
    <name type="ordered locus">Meso_1918</name>
</gene>
<feature type="chain" id="PRO_0000258465" description="Large ribosomal subunit protein bL9">
    <location>
        <begin position="1"/>
        <end position="196"/>
    </location>
</feature>
<feature type="region of interest" description="Disordered" evidence="2">
    <location>
        <begin position="172"/>
        <end position="196"/>
    </location>
</feature>
<feature type="compositionally biased region" description="Acidic residues" evidence="2">
    <location>
        <begin position="181"/>
        <end position="196"/>
    </location>
</feature>